<proteinExistence type="inferred from homology"/>
<gene>
    <name evidence="1" type="primary">purQ</name>
    <name type="ordered locus">alr2475</name>
</gene>
<comment type="function">
    <text evidence="1">Part of the phosphoribosylformylglycinamidine synthase complex involved in the purines biosynthetic pathway. Catalyzes the ATP-dependent conversion of formylglycinamide ribonucleotide (FGAR) and glutamine to yield formylglycinamidine ribonucleotide (FGAM) and glutamate. The FGAM synthase complex is composed of three subunits. PurQ produces an ammonia molecule by converting glutamine to glutamate. PurL transfers the ammonia molecule to FGAR to form FGAM in an ATP-dependent manner. PurS interacts with PurQ and PurL and is thought to assist in the transfer of the ammonia molecule from PurQ to PurL.</text>
</comment>
<comment type="catalytic activity">
    <reaction evidence="1">
        <text>N(2)-formyl-N(1)-(5-phospho-beta-D-ribosyl)glycinamide + L-glutamine + ATP + H2O = 2-formamido-N(1)-(5-O-phospho-beta-D-ribosyl)acetamidine + L-glutamate + ADP + phosphate + H(+)</text>
        <dbReference type="Rhea" id="RHEA:17129"/>
        <dbReference type="ChEBI" id="CHEBI:15377"/>
        <dbReference type="ChEBI" id="CHEBI:15378"/>
        <dbReference type="ChEBI" id="CHEBI:29985"/>
        <dbReference type="ChEBI" id="CHEBI:30616"/>
        <dbReference type="ChEBI" id="CHEBI:43474"/>
        <dbReference type="ChEBI" id="CHEBI:58359"/>
        <dbReference type="ChEBI" id="CHEBI:147286"/>
        <dbReference type="ChEBI" id="CHEBI:147287"/>
        <dbReference type="ChEBI" id="CHEBI:456216"/>
        <dbReference type="EC" id="6.3.5.3"/>
    </reaction>
</comment>
<comment type="catalytic activity">
    <reaction evidence="1">
        <text>L-glutamine + H2O = L-glutamate + NH4(+)</text>
        <dbReference type="Rhea" id="RHEA:15889"/>
        <dbReference type="ChEBI" id="CHEBI:15377"/>
        <dbReference type="ChEBI" id="CHEBI:28938"/>
        <dbReference type="ChEBI" id="CHEBI:29985"/>
        <dbReference type="ChEBI" id="CHEBI:58359"/>
        <dbReference type="EC" id="3.5.1.2"/>
    </reaction>
</comment>
<comment type="pathway">
    <text evidence="1">Purine metabolism; IMP biosynthesis via de novo pathway; 5-amino-1-(5-phospho-D-ribosyl)imidazole from N(2)-formyl-N(1)-(5-phospho-D-ribosyl)glycinamide: step 1/2.</text>
</comment>
<comment type="subunit">
    <text evidence="1">Part of the FGAM synthase complex composed of 1 PurL, 1 PurQ and 2 PurS subunits.</text>
</comment>
<comment type="subcellular location">
    <subcellularLocation>
        <location evidence="1">Cytoplasm</location>
    </subcellularLocation>
</comment>
<name>PURQ_NOSS1</name>
<evidence type="ECO:0000255" key="1">
    <source>
        <dbReference type="HAMAP-Rule" id="MF_00421"/>
    </source>
</evidence>
<organism>
    <name type="scientific">Nostoc sp. (strain PCC 7120 / SAG 25.82 / UTEX 2576)</name>
    <dbReference type="NCBI Taxonomy" id="103690"/>
    <lineage>
        <taxon>Bacteria</taxon>
        <taxon>Bacillati</taxon>
        <taxon>Cyanobacteriota</taxon>
        <taxon>Cyanophyceae</taxon>
        <taxon>Nostocales</taxon>
        <taxon>Nostocaceae</taxon>
        <taxon>Nostoc</taxon>
    </lineage>
</organism>
<feature type="chain" id="PRO_0000100529" description="Phosphoribosylformylglycinamidine synthase subunit PurQ">
    <location>
        <begin position="1"/>
        <end position="224"/>
    </location>
</feature>
<feature type="domain" description="Glutamine amidotransferase type-1" evidence="1">
    <location>
        <begin position="3"/>
        <end position="224"/>
    </location>
</feature>
<feature type="active site" description="Nucleophile" evidence="1">
    <location>
        <position position="86"/>
    </location>
</feature>
<feature type="active site" evidence="1">
    <location>
        <position position="195"/>
    </location>
</feature>
<feature type="active site" evidence="1">
    <location>
        <position position="197"/>
    </location>
</feature>
<sequence length="224" mass="24258">MKFGVVVFPGSNCDRDVAYVTRDLLGQPTRMVWHQDTDIADLDVVIIPGGFSYGDYLRCGAIARFSPVMQQVVEHAQKGKLVLGICNGFQVLTEAGLLPGALARNQDLHFICDRVPLTVESTNSLWTQAYNPGEVITLPIAHGEGRFYADEATLSEIEDNGQVLFRYAGENPNGSLNNIAGICDRQGNVLGMMPHPERASDPVLGGSDGLKLFQGLLEKVVALA</sequence>
<keyword id="KW-0067">ATP-binding</keyword>
<keyword id="KW-0963">Cytoplasm</keyword>
<keyword id="KW-0315">Glutamine amidotransferase</keyword>
<keyword id="KW-0378">Hydrolase</keyword>
<keyword id="KW-0436">Ligase</keyword>
<keyword id="KW-0547">Nucleotide-binding</keyword>
<keyword id="KW-0658">Purine biosynthesis</keyword>
<keyword id="KW-1185">Reference proteome</keyword>
<dbReference type="EC" id="6.3.5.3" evidence="1"/>
<dbReference type="EC" id="3.5.1.2" evidence="1"/>
<dbReference type="EMBL" id="BA000019">
    <property type="protein sequence ID" value="BAB74174.1"/>
    <property type="molecule type" value="Genomic_DNA"/>
</dbReference>
<dbReference type="PIR" id="AD2115">
    <property type="entry name" value="AD2115"/>
</dbReference>
<dbReference type="RefSeq" id="WP_010996631.1">
    <property type="nucleotide sequence ID" value="NZ_RSCN01000002.1"/>
</dbReference>
<dbReference type="SMR" id="Q8YU79"/>
<dbReference type="STRING" id="103690.gene:10494506"/>
<dbReference type="KEGG" id="ana:alr2475"/>
<dbReference type="eggNOG" id="COG0047">
    <property type="taxonomic scope" value="Bacteria"/>
</dbReference>
<dbReference type="OrthoDB" id="9804441at2"/>
<dbReference type="UniPathway" id="UPA00074">
    <property type="reaction ID" value="UER00128"/>
</dbReference>
<dbReference type="Proteomes" id="UP000002483">
    <property type="component" value="Chromosome"/>
</dbReference>
<dbReference type="GO" id="GO:0005737">
    <property type="term" value="C:cytoplasm"/>
    <property type="evidence" value="ECO:0007669"/>
    <property type="project" value="UniProtKB-SubCell"/>
</dbReference>
<dbReference type="GO" id="GO:0005524">
    <property type="term" value="F:ATP binding"/>
    <property type="evidence" value="ECO:0007669"/>
    <property type="project" value="UniProtKB-KW"/>
</dbReference>
<dbReference type="GO" id="GO:0004359">
    <property type="term" value="F:glutaminase activity"/>
    <property type="evidence" value="ECO:0007669"/>
    <property type="project" value="UniProtKB-EC"/>
</dbReference>
<dbReference type="GO" id="GO:0004642">
    <property type="term" value="F:phosphoribosylformylglycinamidine synthase activity"/>
    <property type="evidence" value="ECO:0007669"/>
    <property type="project" value="UniProtKB-UniRule"/>
</dbReference>
<dbReference type="GO" id="GO:0006189">
    <property type="term" value="P:'de novo' IMP biosynthetic process"/>
    <property type="evidence" value="ECO:0007669"/>
    <property type="project" value="UniProtKB-UniRule"/>
</dbReference>
<dbReference type="CDD" id="cd01740">
    <property type="entry name" value="GATase1_FGAR_AT"/>
    <property type="match status" value="1"/>
</dbReference>
<dbReference type="FunFam" id="3.40.50.880:FF:000019">
    <property type="entry name" value="Phosphoribosylformylglycinamidine synthase subunit PurQ"/>
    <property type="match status" value="1"/>
</dbReference>
<dbReference type="Gene3D" id="3.40.50.880">
    <property type="match status" value="1"/>
</dbReference>
<dbReference type="HAMAP" id="MF_00421">
    <property type="entry name" value="PurQ"/>
    <property type="match status" value="1"/>
</dbReference>
<dbReference type="InterPro" id="IPR029062">
    <property type="entry name" value="Class_I_gatase-like"/>
</dbReference>
<dbReference type="InterPro" id="IPR010075">
    <property type="entry name" value="PRibForGlyAmidine_synth_PurQ"/>
</dbReference>
<dbReference type="NCBIfam" id="TIGR01737">
    <property type="entry name" value="FGAM_synth_I"/>
    <property type="match status" value="1"/>
</dbReference>
<dbReference type="NCBIfam" id="NF002957">
    <property type="entry name" value="PRK03619.1"/>
    <property type="match status" value="1"/>
</dbReference>
<dbReference type="PANTHER" id="PTHR47552">
    <property type="entry name" value="PHOSPHORIBOSYLFORMYLGLYCINAMIDINE SYNTHASE SUBUNIT PURQ"/>
    <property type="match status" value="1"/>
</dbReference>
<dbReference type="PANTHER" id="PTHR47552:SF1">
    <property type="entry name" value="PHOSPHORIBOSYLFORMYLGLYCINAMIDINE SYNTHASE SUBUNIT PURQ"/>
    <property type="match status" value="1"/>
</dbReference>
<dbReference type="Pfam" id="PF13507">
    <property type="entry name" value="GATase_5"/>
    <property type="match status" value="1"/>
</dbReference>
<dbReference type="PIRSF" id="PIRSF001586">
    <property type="entry name" value="FGAM_synth_I"/>
    <property type="match status" value="1"/>
</dbReference>
<dbReference type="SMART" id="SM01211">
    <property type="entry name" value="GATase_5"/>
    <property type="match status" value="1"/>
</dbReference>
<dbReference type="SUPFAM" id="SSF52317">
    <property type="entry name" value="Class I glutamine amidotransferase-like"/>
    <property type="match status" value="1"/>
</dbReference>
<dbReference type="PROSITE" id="PS51273">
    <property type="entry name" value="GATASE_TYPE_1"/>
    <property type="match status" value="1"/>
</dbReference>
<reference key="1">
    <citation type="journal article" date="2001" name="DNA Res.">
        <title>Complete genomic sequence of the filamentous nitrogen-fixing cyanobacterium Anabaena sp. strain PCC 7120.</title>
        <authorList>
            <person name="Kaneko T."/>
            <person name="Nakamura Y."/>
            <person name="Wolk C.P."/>
            <person name="Kuritz T."/>
            <person name="Sasamoto S."/>
            <person name="Watanabe A."/>
            <person name="Iriguchi M."/>
            <person name="Ishikawa A."/>
            <person name="Kawashima K."/>
            <person name="Kimura T."/>
            <person name="Kishida Y."/>
            <person name="Kohara M."/>
            <person name="Matsumoto M."/>
            <person name="Matsuno A."/>
            <person name="Muraki A."/>
            <person name="Nakazaki N."/>
            <person name="Shimpo S."/>
            <person name="Sugimoto M."/>
            <person name="Takazawa M."/>
            <person name="Yamada M."/>
            <person name="Yasuda M."/>
            <person name="Tabata S."/>
        </authorList>
    </citation>
    <scope>NUCLEOTIDE SEQUENCE [LARGE SCALE GENOMIC DNA]</scope>
    <source>
        <strain>PCC 7120 / SAG 25.82 / UTEX 2576</strain>
    </source>
</reference>
<protein>
    <recommendedName>
        <fullName evidence="1">Phosphoribosylformylglycinamidine synthase subunit PurQ</fullName>
        <shortName evidence="1">FGAM synthase</shortName>
        <ecNumber evidence="1">6.3.5.3</ecNumber>
    </recommendedName>
    <alternativeName>
        <fullName evidence="1">Formylglycinamide ribonucleotide amidotransferase subunit I</fullName>
        <shortName evidence="1">FGAR amidotransferase I</shortName>
        <shortName evidence="1">FGAR-AT I</shortName>
    </alternativeName>
    <alternativeName>
        <fullName evidence="1">Glutaminase PurQ</fullName>
        <ecNumber evidence="1">3.5.1.2</ecNumber>
    </alternativeName>
    <alternativeName>
        <fullName evidence="1">Phosphoribosylformylglycinamidine synthase subunit I</fullName>
    </alternativeName>
</protein>
<accession>Q8YU79</accession>